<organismHost>
    <name type="scientific">Ornithodoros</name>
    <name type="common">relapsing fever ticks</name>
    <dbReference type="NCBI Taxonomy" id="6937"/>
</organismHost>
<organismHost>
    <name type="scientific">Phacochoerus aethiopicus</name>
    <name type="common">Warthog</name>
    <dbReference type="NCBI Taxonomy" id="85517"/>
</organismHost>
<organismHost>
    <name type="scientific">Phacochoerus africanus</name>
    <name type="common">Warthog</name>
    <dbReference type="NCBI Taxonomy" id="41426"/>
</organismHost>
<organismHost>
    <name type="scientific">Potamochoerus larvatus</name>
    <name type="common">Bushpig</name>
    <dbReference type="NCBI Taxonomy" id="273792"/>
</organismHost>
<organismHost>
    <name type="scientific">Sus scrofa</name>
    <name type="common">Pig</name>
    <dbReference type="NCBI Taxonomy" id="9823"/>
</organismHost>
<reference key="1">
    <citation type="submission" date="2003-03" db="EMBL/GenBank/DDBJ databases">
        <title>African swine fever virus genomes.</title>
        <authorList>
            <person name="Kutish G.F."/>
            <person name="Rock D.L."/>
        </authorList>
    </citation>
    <scope>NUCLEOTIDE SEQUENCE [LARGE SCALE GENOMIC DNA]</scope>
</reference>
<protein>
    <recommendedName>
        <fullName>Protein MGF 505-1R</fullName>
    </recommendedName>
</protein>
<dbReference type="EMBL" id="AY261363">
    <property type="status" value="NOT_ANNOTATED_CDS"/>
    <property type="molecule type" value="Genomic_DNA"/>
</dbReference>
<dbReference type="Proteomes" id="UP000000859">
    <property type="component" value="Segment"/>
</dbReference>
<dbReference type="InterPro" id="IPR004858">
    <property type="entry name" value="MGF_505"/>
</dbReference>
<dbReference type="Pfam" id="PF03158">
    <property type="entry name" value="DUF249"/>
    <property type="match status" value="1"/>
</dbReference>
<name>5051R_ASFP4</name>
<feature type="chain" id="PRO_0000373315" description="Protein MGF 505-1R">
    <location>
        <begin position="1"/>
        <end position="531"/>
    </location>
</feature>
<gene>
    <name type="ordered locus">Pret-034</name>
</gene>
<evidence type="ECO:0000250" key="1"/>
<evidence type="ECO:0000305" key="2"/>
<proteinExistence type="inferred from homology"/>
<sequence>MFSLQNLCRKTLPDCKLPEFFDEYILQLLGLYWENHGTIQRAGNNCVLVQQHTLIPVNEALRIAASEENYEIVSLLLAWEGNLYYAIIGALEGNRHDLIRKYDDQIKDHHEILPFIDNPVIFHKCHIMRRCFFDCILYQAVKYSKFRVLLYFKYRLENDLPLAHLLVEKACEDHNYEVIKWLYENLHIYNIMETFECAIAHKDLRLYRLGYTFIYNRIVPYKYHYLDVLILSGLHLLYKVAAKGYLDFILETLKYDHNNDNLDIILTQAVTYNHRKILTYYIPQLTYAQIEQCLFMAIKKKSSKKTLNLLLSHLKLSIKLIKKISQYVATYNSTNIIGILNMKRKKKIYLDIILTKFVKYAIFNKYVVRCMDTFSINPERIIKMAARINKMLLVKKISQHAWKNHAARLKHLKHAVYTMKHKDGKNRLMNLIYDHYYYHMQGEEIFSLARFYAIHHAPKLFDVFYDCCLLDTIRFKSLLLDCSHIIGKNAHDATNITIVNKYIGNLFAMGVLSKKEILQDYPSIYSKHYMP</sequence>
<organism>
    <name type="scientific">African swine fever virus (isolate Tick/South Africa/Pretoriuskop Pr4/1996)</name>
    <name type="common">ASFV</name>
    <dbReference type="NCBI Taxonomy" id="561443"/>
    <lineage>
        <taxon>Viruses</taxon>
        <taxon>Varidnaviria</taxon>
        <taxon>Bamfordvirae</taxon>
        <taxon>Nucleocytoviricota</taxon>
        <taxon>Pokkesviricetes</taxon>
        <taxon>Asfuvirales</taxon>
        <taxon>Asfarviridae</taxon>
        <taxon>Asfivirus</taxon>
        <taxon>African swine fever virus</taxon>
    </lineage>
</organism>
<comment type="function">
    <text evidence="1">Plays a role in virus cell tropism, and may be required for efficient virus replication in macrophages.</text>
</comment>
<comment type="similarity">
    <text evidence="2">Belongs to the asfivirus MGF 505 family.</text>
</comment>
<accession>P0C9S5</accession>